<protein>
    <recommendedName>
        <fullName>Na(+)/dicarboxylate cotransporter 3</fullName>
        <shortName>NaDC-3</shortName>
        <shortName>rNaDC3</shortName>
    </recommendedName>
    <alternativeName>
        <fullName>Na(+)-coupled carboxylate transporter 3</fullName>
        <shortName>NaC3</shortName>
    </alternativeName>
    <alternativeName>
        <fullName evidence="9">Sodium-dependent high-affinity dicarboxylate transporter 2</fullName>
        <shortName evidence="9">SDCT2</shortName>
    </alternativeName>
    <alternativeName>
        <fullName>Solute carrier family 13 member 3</fullName>
    </alternativeName>
</protein>
<comment type="function">
    <text evidence="1 4 5 6 7 8">High-affinity sodium-dicarboxylate cotransporter that accepts a range of substrates with 4-6 carbon atoms, such as the citric acid cycle intermediates succinate and alpha-ketoglutarate (2-oxoglutarate), as well as other compounds including N-acetyl-L-aspartate (PubMed:10207168, PubMed:10794676, PubMed:10992006, PubMed:12177002, PubMed:9920886). Transports the dicarboxylate into the cell with a probable stoichiometry of 3 Na(+) for 1 divalent dicarboxylate, rendering the process electrogenic (PubMed:10207168, PubMed:10992006, PubMed:9920886). Can transport citrate in a Na(+)-dependent manner, recognizing the divalent form of citrate rather than the trivalent form which is normally found in blood (PubMed:10207168). Imports itaconate in hepatocytes leading to activation of TFEB-dependent lysosomal biogenesis involved in antibacterial innate immune response.</text>
</comment>
<comment type="catalytic activity">
    <reaction evidence="4 5 6 7 8">
        <text>succinate(out) + 3 Na(+)(out) = succinate(in) + 3 Na(+)(in)</text>
        <dbReference type="Rhea" id="RHEA:71919"/>
        <dbReference type="ChEBI" id="CHEBI:29101"/>
        <dbReference type="ChEBI" id="CHEBI:30031"/>
    </reaction>
</comment>
<comment type="catalytic activity">
    <reaction evidence="12">
        <text>2-oxoglutarate(out) + 3 Na(+)(out) = 2-oxoglutarate(in) + 3 Na(+)(in)</text>
        <dbReference type="Rhea" id="RHEA:71939"/>
        <dbReference type="ChEBI" id="CHEBI:16810"/>
        <dbReference type="ChEBI" id="CHEBI:29101"/>
    </reaction>
</comment>
<comment type="catalytic activity">
    <reaction evidence="11">
        <text>N-acetyl-L-aspartate(out) + 3 Na(+)(out) = N-acetyl-L-aspartate(in) + 3 Na(+)(in)</text>
        <dbReference type="Rhea" id="RHEA:71947"/>
        <dbReference type="ChEBI" id="CHEBI:16953"/>
        <dbReference type="ChEBI" id="CHEBI:29101"/>
    </reaction>
</comment>
<comment type="catalytic activity">
    <reaction evidence="1">
        <text>glutarate(out) + 3 Na(+)(out) = glutarate(in) + 3 Na(+)(in)</text>
        <dbReference type="Rhea" id="RHEA:71955"/>
        <dbReference type="ChEBI" id="CHEBI:29101"/>
        <dbReference type="ChEBI" id="CHEBI:30921"/>
    </reaction>
</comment>
<comment type="catalytic activity">
    <reaction evidence="2">
        <text>fumarate(out) + 3 Na(+)(out) = fumarate(in) + 3 Na(+)(in)</text>
        <dbReference type="Rhea" id="RHEA:71931"/>
        <dbReference type="ChEBI" id="CHEBI:29101"/>
        <dbReference type="ChEBI" id="CHEBI:29806"/>
    </reaction>
</comment>
<comment type="catalytic activity">
    <reaction evidence="1">
        <text>malate(out) + 3 Na(+)(out) = malate(in) + 3 Na(+)(in)</text>
        <dbReference type="Rhea" id="RHEA:72295"/>
        <dbReference type="ChEBI" id="CHEBI:15595"/>
        <dbReference type="ChEBI" id="CHEBI:29101"/>
    </reaction>
</comment>
<comment type="catalytic activity">
    <reaction evidence="1">
        <text>2,2-dimethylsuccinate(out) + 3 Na(+)(out) = 2,2-dimethylsuccinate(in) + 3 Na(+)(in)</text>
        <dbReference type="Rhea" id="RHEA:72287"/>
        <dbReference type="ChEBI" id="CHEBI:29101"/>
        <dbReference type="ChEBI" id="CHEBI:191383"/>
    </reaction>
</comment>
<comment type="catalytic activity">
    <reaction evidence="1">
        <text>2,3-dimethylsuccinate(out) + 3 Na(+)(out) = 2,3-dimethylsuccinate(in) + 3 Na(+)(in)</text>
        <dbReference type="Rhea" id="RHEA:72291"/>
        <dbReference type="ChEBI" id="CHEBI:29101"/>
        <dbReference type="ChEBI" id="CHEBI:191384"/>
    </reaction>
</comment>
<comment type="catalytic activity">
    <reaction evidence="1">
        <text>itaconate(out) + 3 Na(+)(out) = itaconate(in) + 3 Na(+)(in)</text>
        <dbReference type="Rhea" id="RHEA:82295"/>
        <dbReference type="ChEBI" id="CHEBI:17240"/>
        <dbReference type="ChEBI" id="CHEBI:29101"/>
    </reaction>
</comment>
<comment type="activity regulation">
    <text evidence="4">Li(+) decreases succinate transport in the presence of Na(+).</text>
</comment>
<comment type="biophysicochemical properties">
    <kinetics>
        <KM evidence="4">15 uM for succinate</KM>
    </kinetics>
    <phDependence>
        <text evidence="4 8">Optimum pH is 7.5.</text>
    </phDependence>
</comment>
<comment type="subcellular location">
    <subcellularLocation>
        <location>Cell membrane</location>
        <topology>Multi-pass membrane protein</topology>
    </subcellularLocation>
</comment>
<comment type="tissue specificity">
    <text evidence="4 6 8">Highly expressed in proximal parts of straight tubules in the kidney (PubMed:10207168, PubMed:9920886). Detected in placenta, in brain, and in liver (PubMed:9920886). Strongly expressed within the meningeal layers of supporting tissue that surround the brain and relatively weakly expressed throughout the cerebral cortex, hippocampus, and cerebellum (PubMed:10992006).</text>
</comment>
<comment type="similarity">
    <text evidence="10">Belongs to the SLC13A/DASS transporter (TC 2.A.47) family. NADC subfamily.</text>
</comment>
<feature type="chain" id="PRO_0000172494" description="Na(+)/dicarboxylate cotransporter 3">
    <location>
        <begin position="1"/>
        <end position="600"/>
    </location>
</feature>
<feature type="topological domain" description="Cytoplasmic" evidence="3">
    <location>
        <begin position="1"/>
        <end position="16"/>
    </location>
</feature>
<feature type="transmembrane region" description="Helical" evidence="3">
    <location>
        <begin position="17"/>
        <end position="37"/>
    </location>
</feature>
<feature type="topological domain" description="Extracellular" evidence="3">
    <location>
        <begin position="38"/>
        <end position="55"/>
    </location>
</feature>
<feature type="transmembrane region" description="Helical" evidence="3">
    <location>
        <begin position="56"/>
        <end position="76"/>
    </location>
</feature>
<feature type="topological domain" description="Cytoplasmic" evidence="3">
    <location>
        <begin position="77"/>
        <end position="82"/>
    </location>
</feature>
<feature type="transmembrane region" description="Helical" evidence="3">
    <location>
        <begin position="83"/>
        <end position="103"/>
    </location>
</feature>
<feature type="topological domain" description="Extracellular" evidence="3">
    <location>
        <begin position="104"/>
        <end position="137"/>
    </location>
</feature>
<feature type="transmembrane region" description="Helical" evidence="3">
    <location>
        <begin position="138"/>
        <end position="158"/>
    </location>
</feature>
<feature type="topological domain" description="Cytoplasmic" evidence="3">
    <location>
        <begin position="159"/>
        <end position="229"/>
    </location>
</feature>
<feature type="transmembrane region" description="Helical" evidence="3">
    <location>
        <begin position="230"/>
        <end position="250"/>
    </location>
</feature>
<feature type="topological domain" description="Extracellular" evidence="3">
    <location>
        <begin position="251"/>
        <end position="278"/>
    </location>
</feature>
<feature type="transmembrane region" description="Helical" evidence="3">
    <location>
        <begin position="279"/>
        <end position="299"/>
    </location>
</feature>
<feature type="topological domain" description="Cytoplasmic" evidence="3">
    <location>
        <begin position="300"/>
        <end position="336"/>
    </location>
</feature>
<feature type="transmembrane region" description="Helical" evidence="3">
    <location>
        <begin position="337"/>
        <end position="357"/>
    </location>
</feature>
<feature type="topological domain" description="Extracellular" evidence="3">
    <location>
        <begin position="358"/>
        <end position="372"/>
    </location>
</feature>
<feature type="transmembrane region" description="Helical" evidence="3">
    <location>
        <begin position="373"/>
        <end position="393"/>
    </location>
</feature>
<feature type="topological domain" description="Cytoplasmic" evidence="3">
    <location>
        <begin position="394"/>
        <end position="422"/>
    </location>
</feature>
<feature type="intramembrane region" description="Helical" evidence="3">
    <location>
        <begin position="423"/>
        <end position="443"/>
    </location>
</feature>
<feature type="topological domain" description="Cytoplasmic" evidence="3">
    <location>
        <begin position="444"/>
        <end position="461"/>
    </location>
</feature>
<feature type="transmembrane region" description="Helical" evidence="3">
    <location>
        <begin position="462"/>
        <end position="482"/>
    </location>
</feature>
<feature type="topological domain" description="Extracellular" evidence="3">
    <location>
        <begin position="483"/>
        <end position="505"/>
    </location>
</feature>
<feature type="transmembrane region" description="Helical" evidence="3">
    <location>
        <begin position="506"/>
        <end position="526"/>
    </location>
</feature>
<feature type="topological domain" description="Cytoplasmic" evidence="3">
    <location>
        <begin position="527"/>
        <end position="546"/>
    </location>
</feature>
<feature type="transmembrane region" description="Helical" evidence="3">
    <location>
        <begin position="547"/>
        <end position="567"/>
    </location>
</feature>
<feature type="topological domain" description="Extracellular" evidence="3">
    <location>
        <begin position="568"/>
        <end position="600"/>
    </location>
</feature>
<feature type="glycosylation site" description="N-linked (GlcNAc...) asparagine" evidence="3">
    <location>
        <position position="584"/>
    </location>
</feature>
<feature type="glycosylation site" description="N-linked (GlcNAc...) asparagine" evidence="3">
    <location>
        <position position="594"/>
    </location>
</feature>
<proteinExistence type="evidence at protein level"/>
<accession>Q9Z0Z5</accession>
<organism>
    <name type="scientific">Rattus norvegicus</name>
    <name type="common">Rat</name>
    <dbReference type="NCBI Taxonomy" id="10116"/>
    <lineage>
        <taxon>Eukaryota</taxon>
        <taxon>Metazoa</taxon>
        <taxon>Chordata</taxon>
        <taxon>Craniata</taxon>
        <taxon>Vertebrata</taxon>
        <taxon>Euteleostomi</taxon>
        <taxon>Mammalia</taxon>
        <taxon>Eutheria</taxon>
        <taxon>Euarchontoglires</taxon>
        <taxon>Glires</taxon>
        <taxon>Rodentia</taxon>
        <taxon>Myomorpha</taxon>
        <taxon>Muroidea</taxon>
        <taxon>Muridae</taxon>
        <taxon>Murinae</taxon>
        <taxon>Rattus</taxon>
    </lineage>
</organism>
<gene>
    <name type="primary">Slc13a3</name>
    <name type="synonym">Nadc3</name>
    <name type="synonym">Sdct2</name>
</gene>
<reference key="1">
    <citation type="journal article" date="1999" name="J. Biol. Chem.">
        <title>Primary structure and functional characteristics of a mammalian sodium-coupled high affinity dicarboxylate transporter.</title>
        <authorList>
            <person name="Kekuda R."/>
            <person name="Wang H."/>
            <person name="Huang W."/>
            <person name="Pajor A.M."/>
            <person name="Leibach F.H."/>
            <person name="Devoe L.D."/>
            <person name="Prasad P.D."/>
            <person name="Ganapathy V."/>
        </authorList>
    </citation>
    <scope>NUCLEOTIDE SEQUENCE [MRNA]</scope>
    <scope>TISSUE SPECIFICITY</scope>
    <scope>FUNCTION</scope>
    <scope>TRANSPORT ACTIVITY</scope>
    <source>
        <tissue>Placenta</tissue>
    </source>
</reference>
<reference key="2">
    <citation type="journal article" date="1999" name="J. Clin. Invest.">
        <title>Molecular and functional analysis of SDCT2, a novel rat sodium-dependent dicarboxylate transporter.</title>
        <authorList>
            <person name="Chen X."/>
            <person name="Tsukaguchi H."/>
            <person name="Chen X.-Z."/>
            <person name="Berger U.V."/>
            <person name="Hediger M.A."/>
        </authorList>
    </citation>
    <scope>NUCLEOTIDE SEQUENCE [MRNA]</scope>
    <scope>TISSUE SPECIFICITY</scope>
    <scope>ACTIVITY REGULATION</scope>
    <scope>FUNCTION</scope>
    <scope>TRANSPORT ACTIVITY</scope>
    <scope>BIOPHYSICOCHEMICAL PROPERTIES</scope>
    <source>
        <strain>Sprague-Dawley</strain>
        <tissue>Kidney</tissue>
    </source>
</reference>
<reference key="3">
    <citation type="journal article" date="2000" name="Am. J. Physiol.">
        <title>Structure, function, and genomic organization of human Na(+)-dependent high-affinity dicarboxylate transporter.</title>
        <authorList>
            <person name="Wang H."/>
            <person name="Fei Y.-J."/>
            <person name="Kekuda R."/>
            <person name="Yang-Feng T.L."/>
            <person name="Devoe L.D."/>
            <person name="Leibach F.H."/>
            <person name="Prasad P.D."/>
            <person name="Ganapathy V."/>
        </authorList>
    </citation>
    <scope>FUNCTION</scope>
    <scope>TRANSPORT ACTIVITY</scope>
    <source>
        <tissue>Placenta</tissue>
    </source>
</reference>
<reference key="4">
    <citation type="journal article" date="2000" name="J. Pharmacol. Exp. Ther.">
        <title>Transport of N-acetylaspartate by the Na(+)-dependent high-affinity dicarboxylate transporter NaDC3 and its relevance to the expression of the transporter in the brain.</title>
        <authorList>
            <person name="Huang W."/>
            <person name="Wang H."/>
            <person name="Kekuda R."/>
            <person name="Fei Y.J."/>
            <person name="Friedrich A."/>
            <person name="Wang J."/>
            <person name="Conway S.J."/>
            <person name="Cameron R.S."/>
            <person name="Leibach F.H."/>
            <person name="Ganapathy V."/>
        </authorList>
    </citation>
    <scope>FUNCTION</scope>
    <scope>TRANSPORT ACTIVITY</scope>
    <scope>TISSUE SPECIFICITY</scope>
</reference>
<reference key="5">
    <citation type="journal article" date="2002" name="J. Biol. Chem.">
        <title>Structure, function, and expression pattern of a novel sodium-coupled citrate transporter (NaCT) cloned from mammalian brain.</title>
        <authorList>
            <person name="Inoue K."/>
            <person name="Zhuang L."/>
            <person name="Maddox D.M."/>
            <person name="Smith S.B."/>
            <person name="Ganapathy V."/>
        </authorList>
    </citation>
    <scope>FUNCTION</scope>
    <scope>TRANSPORT ACTIVITY</scope>
    <source>
        <strain>Sprague-Dawley</strain>
        <tissue>Brain</tissue>
    </source>
</reference>
<name>S13A3_RAT</name>
<keyword id="KW-1003">Cell membrane</keyword>
<keyword id="KW-0325">Glycoprotein</keyword>
<keyword id="KW-0406">Ion transport</keyword>
<keyword id="KW-0472">Membrane</keyword>
<keyword id="KW-1185">Reference proteome</keyword>
<keyword id="KW-0915">Sodium</keyword>
<keyword id="KW-0739">Sodium transport</keyword>
<keyword id="KW-0769">Symport</keyword>
<keyword id="KW-0812">Transmembrane</keyword>
<keyword id="KW-1133">Transmembrane helix</keyword>
<keyword id="KW-0813">Transport</keyword>
<evidence type="ECO:0000250" key="1">
    <source>
        <dbReference type="UniProtKB" id="Q8WWT9"/>
    </source>
</evidence>
<evidence type="ECO:0000250" key="2">
    <source>
        <dbReference type="UniProtKB" id="Q91Y63"/>
    </source>
</evidence>
<evidence type="ECO:0000255" key="3"/>
<evidence type="ECO:0000269" key="4">
    <source>
    </source>
</evidence>
<evidence type="ECO:0000269" key="5">
    <source>
    </source>
</evidence>
<evidence type="ECO:0000269" key="6">
    <source>
    </source>
</evidence>
<evidence type="ECO:0000269" key="7">
    <source>
    </source>
</evidence>
<evidence type="ECO:0000269" key="8">
    <source>
    </source>
</evidence>
<evidence type="ECO:0000303" key="9">
    <source>
    </source>
</evidence>
<evidence type="ECO:0000305" key="10"/>
<evidence type="ECO:0000305" key="11">
    <source>
    </source>
</evidence>
<evidence type="ECO:0000305" key="12">
    <source>
    </source>
</evidence>
<sequence length="600" mass="66099">MAALAALAKKVWSARRLLVLLLVPLALLPILFALPPKEGRCLYVILLMAVYWCTEALPLSVTALLPIILFPFMGILPSSKVCPQYFLDTNFLFLSGLIMASAIEERNLHRRIALKVLMLVGVQPARLILGMMVTTSFLSMWLSNTASTAMMLPIASAILKSLFGQRDTRKDLPREGEDSTAAVRGNGLRTVPTEMQFLASSEGGHAEDVEAPLELPDDSKEEEHRRNIWKGFLISIPYSASIGGTATLTGTAPNLILLGQLKSFFPQCDVVNFGSWFIFAFPLMLLFLLVGWLWISFLYGGMSWRGWRKKNSKLQDVAEDKAKAVIQEEFQNLGPIKFAEQAVFILFCLFAILLFSRDPKFIPGWASLFAPGFVSDAVTGVAIVTILFFFPSQKPSLKWWFDFKAPNSETEPLLSWKKAQETVPWNIILLLGGGFAMAKGCEESGLSAWIGGQLHPLEHVPPLLAVLLITVVIAFFTEFASNTATIIIFLPVLAELAIRLHVHPLYLMIPGTVSCSYAFMLPVSTPPNSIAFSTGHLLVKDMVRTGLLMNLMGVLLLSLAMNTWAQAIFQLGTFPDWANTHAANVTALPPALTNNTVQTL</sequence>
<dbReference type="EMBL" id="AF081825">
    <property type="protein sequence ID" value="AAD16019.1"/>
    <property type="molecule type" value="mRNA"/>
</dbReference>
<dbReference type="EMBL" id="AF080451">
    <property type="protein sequence ID" value="AAD30657.1"/>
    <property type="molecule type" value="mRNA"/>
</dbReference>
<dbReference type="SMR" id="Q9Z0Z5"/>
<dbReference type="FunCoup" id="Q9Z0Z5">
    <property type="interactions" value="625"/>
</dbReference>
<dbReference type="STRING" id="10116.ENSRNOP00000025843"/>
<dbReference type="TCDB" id="2.A.47.1.4">
    <property type="family name" value="the divalent anion:na(+) symporter (dass) family"/>
</dbReference>
<dbReference type="GlyCosmos" id="Q9Z0Z5">
    <property type="glycosylation" value="2 sites, No reported glycans"/>
</dbReference>
<dbReference type="GlyGen" id="Q9Z0Z5">
    <property type="glycosylation" value="2 sites"/>
</dbReference>
<dbReference type="PhosphoSitePlus" id="Q9Z0Z5"/>
<dbReference type="PaxDb" id="10116-ENSRNOP00000025843"/>
<dbReference type="UCSC" id="RGD:628786">
    <property type="organism name" value="rat"/>
</dbReference>
<dbReference type="AGR" id="RGD:628786"/>
<dbReference type="RGD" id="628786">
    <property type="gene designation" value="Slc13a3"/>
</dbReference>
<dbReference type="eggNOG" id="KOG1281">
    <property type="taxonomic scope" value="Eukaryota"/>
</dbReference>
<dbReference type="InParanoid" id="Q9Z0Z5"/>
<dbReference type="OrthoDB" id="6493944at2759"/>
<dbReference type="PhylomeDB" id="Q9Z0Z5"/>
<dbReference type="Reactome" id="R-RNO-433137">
    <property type="pathway name" value="Sodium-coupled sulphate, di- and tri-carboxylate transporters"/>
</dbReference>
<dbReference type="SABIO-RK" id="Q9Z0Z5"/>
<dbReference type="PRO" id="PR:Q9Z0Z5"/>
<dbReference type="Proteomes" id="UP000002494">
    <property type="component" value="Unplaced"/>
</dbReference>
<dbReference type="GO" id="GO:0016323">
    <property type="term" value="C:basolateral plasma membrane"/>
    <property type="evidence" value="ECO:0000266"/>
    <property type="project" value="RGD"/>
</dbReference>
<dbReference type="GO" id="GO:0016020">
    <property type="term" value="C:membrane"/>
    <property type="evidence" value="ECO:0000266"/>
    <property type="project" value="RGD"/>
</dbReference>
<dbReference type="GO" id="GO:0005886">
    <property type="term" value="C:plasma membrane"/>
    <property type="evidence" value="ECO:0000318"/>
    <property type="project" value="GO_Central"/>
</dbReference>
<dbReference type="GO" id="GO:0015139">
    <property type="term" value="F:alpha-ketoglutarate transmembrane transporter activity"/>
    <property type="evidence" value="ECO:0000266"/>
    <property type="project" value="RGD"/>
</dbReference>
<dbReference type="GO" id="GO:0015137">
    <property type="term" value="F:citrate transmembrane transporter activity"/>
    <property type="evidence" value="ECO:0000314"/>
    <property type="project" value="ARUK-UCL"/>
</dbReference>
<dbReference type="GO" id="GO:0005310">
    <property type="term" value="F:dicarboxylic acid transmembrane transporter activity"/>
    <property type="evidence" value="ECO:0000314"/>
    <property type="project" value="RGD"/>
</dbReference>
<dbReference type="GO" id="GO:0034634">
    <property type="term" value="F:glutathione transmembrane transporter activity"/>
    <property type="evidence" value="ECO:0000266"/>
    <property type="project" value="RGD"/>
</dbReference>
<dbReference type="GO" id="GO:0015362">
    <property type="term" value="F:high-affinity sodium:dicarboxylate symporter activity"/>
    <property type="evidence" value="ECO:0000266"/>
    <property type="project" value="RGD"/>
</dbReference>
<dbReference type="GO" id="GO:0015183">
    <property type="term" value="F:L-aspartate transmembrane transporter activity"/>
    <property type="evidence" value="ECO:0000314"/>
    <property type="project" value="RGD"/>
</dbReference>
<dbReference type="GO" id="GO:0005343">
    <property type="term" value="F:organic acid:sodium symporter activity"/>
    <property type="evidence" value="ECO:0000314"/>
    <property type="project" value="RGD"/>
</dbReference>
<dbReference type="GO" id="GO:0017153">
    <property type="term" value="F:sodium:dicarboxylate symporter activity"/>
    <property type="evidence" value="ECO:0000314"/>
    <property type="project" value="RGD"/>
</dbReference>
<dbReference type="GO" id="GO:0015141">
    <property type="term" value="F:succinate transmembrane transporter activity"/>
    <property type="evidence" value="ECO:0000314"/>
    <property type="project" value="ARUK-UCL"/>
</dbReference>
<dbReference type="GO" id="GO:0015810">
    <property type="term" value="P:aspartate transmembrane transport"/>
    <property type="evidence" value="ECO:0000314"/>
    <property type="project" value="RGD"/>
</dbReference>
<dbReference type="GO" id="GO:0015746">
    <property type="term" value="P:citrate transport"/>
    <property type="evidence" value="ECO:0000314"/>
    <property type="project" value="ARUK-UCL"/>
</dbReference>
<dbReference type="GO" id="GO:0006835">
    <property type="term" value="P:dicarboxylic acid transport"/>
    <property type="evidence" value="ECO:0000314"/>
    <property type="project" value="RGD"/>
</dbReference>
<dbReference type="GO" id="GO:0034775">
    <property type="term" value="P:glutathione transmembrane transport"/>
    <property type="evidence" value="ECO:0000266"/>
    <property type="project" value="RGD"/>
</dbReference>
<dbReference type="GO" id="GO:0071422">
    <property type="term" value="P:succinate transmembrane transport"/>
    <property type="evidence" value="ECO:0000314"/>
    <property type="project" value="ARUK-UCL"/>
</dbReference>
<dbReference type="GO" id="GO:0015744">
    <property type="term" value="P:succinate transport"/>
    <property type="evidence" value="ECO:0000314"/>
    <property type="project" value="RGD"/>
</dbReference>
<dbReference type="CDD" id="cd01115">
    <property type="entry name" value="SLC13_permease"/>
    <property type="match status" value="1"/>
</dbReference>
<dbReference type="InterPro" id="IPR001898">
    <property type="entry name" value="SLC13A/DASS"/>
</dbReference>
<dbReference type="PANTHER" id="PTHR10283:SF62">
    <property type="entry name" value="NA(+)_DICARBOXYLATE COTRANSPORTER 3"/>
    <property type="match status" value="1"/>
</dbReference>
<dbReference type="PANTHER" id="PTHR10283">
    <property type="entry name" value="SOLUTE CARRIER FAMILY 13 MEMBER"/>
    <property type="match status" value="1"/>
</dbReference>
<dbReference type="Pfam" id="PF00939">
    <property type="entry name" value="Na_sulph_symp"/>
    <property type="match status" value="1"/>
</dbReference>